<name>LEPA_FRAT1</name>
<proteinExistence type="inferred from homology"/>
<protein>
    <recommendedName>
        <fullName evidence="1">Elongation factor 4</fullName>
        <shortName evidence="1">EF-4</shortName>
        <ecNumber evidence="1">3.6.5.n1</ecNumber>
    </recommendedName>
    <alternativeName>
        <fullName evidence="1">Ribosomal back-translocase LepA</fullName>
    </alternativeName>
</protein>
<sequence>MKNIRNFSIIAHIDHGKSTLSDRFIQVCNGLSEREMKEQVLDSMDIERERGITIKAQSVTLDYTARDGQTYQLNFIDTPGHVDFSYEVSRSLAACEGALLVVDAAQGVEAQTVANCYTAIEQNLEVIPILNKIDLPSAEPDRVAQEIEEIIGIDATGATTCSAKIGIGVEDVLETIVAKVPAPEGDVNAKLQALIIDSWFDNYLGVVSLVRVKNGTIKKGEKFKVMSTGVAYQVDRLGVFTPKMKDLDHLKAGEVGFIVAGIKDIHGAPVGDTLTHAHNPTDKPVPGFKKVQPQVYAGMFTISSDDYPDFREALEKLSLNDASLFFEPEVSQALGFGFRCGFLGMLHMEIIQERLEREYNLDLITSAPTVVYKAIKKDGEIIEVDNLSKLPEPGAIAEIQEPIVRANILVPKDYVGSVITICIEKRGVQVDLNYVGNQVSITYDLPMIEVVSDFFDTLKSVTKGYGSLDYELIRYEPANMVCLDVLINGDKVDALASIVHKDQAKYKGRELVERLKELIPRQMFEVAIQAAIGGTIVARSTVKALRKNVLAKCYGGDVSRKKKLLEKQKEGKKRMKNIGSVEIPQEAFLSVLKK</sequence>
<keyword id="KW-0997">Cell inner membrane</keyword>
<keyword id="KW-1003">Cell membrane</keyword>
<keyword id="KW-0342">GTP-binding</keyword>
<keyword id="KW-0378">Hydrolase</keyword>
<keyword id="KW-0472">Membrane</keyword>
<keyword id="KW-0547">Nucleotide-binding</keyword>
<keyword id="KW-0648">Protein biosynthesis</keyword>
<dbReference type="EC" id="3.6.5.n1" evidence="1"/>
<dbReference type="EMBL" id="AM286280">
    <property type="protein sequence ID" value="CAL09694.1"/>
    <property type="molecule type" value="Genomic_DNA"/>
</dbReference>
<dbReference type="RefSeq" id="WP_003022642.1">
    <property type="nucleotide sequence ID" value="NC_008245.1"/>
</dbReference>
<dbReference type="SMR" id="Q14FW1"/>
<dbReference type="KEGG" id="ftf:FTF1678c"/>
<dbReference type="HOGENOM" id="CLU_009995_3_3_6"/>
<dbReference type="GO" id="GO:0005886">
    <property type="term" value="C:plasma membrane"/>
    <property type="evidence" value="ECO:0007669"/>
    <property type="project" value="UniProtKB-SubCell"/>
</dbReference>
<dbReference type="GO" id="GO:0005525">
    <property type="term" value="F:GTP binding"/>
    <property type="evidence" value="ECO:0007669"/>
    <property type="project" value="UniProtKB-UniRule"/>
</dbReference>
<dbReference type="GO" id="GO:0003924">
    <property type="term" value="F:GTPase activity"/>
    <property type="evidence" value="ECO:0007669"/>
    <property type="project" value="UniProtKB-UniRule"/>
</dbReference>
<dbReference type="GO" id="GO:0097216">
    <property type="term" value="F:guanosine tetraphosphate binding"/>
    <property type="evidence" value="ECO:0007669"/>
    <property type="project" value="UniProtKB-ARBA"/>
</dbReference>
<dbReference type="GO" id="GO:0043022">
    <property type="term" value="F:ribosome binding"/>
    <property type="evidence" value="ECO:0007669"/>
    <property type="project" value="UniProtKB-UniRule"/>
</dbReference>
<dbReference type="GO" id="GO:0003746">
    <property type="term" value="F:translation elongation factor activity"/>
    <property type="evidence" value="ECO:0007669"/>
    <property type="project" value="UniProtKB-UniRule"/>
</dbReference>
<dbReference type="GO" id="GO:0045727">
    <property type="term" value="P:positive regulation of translation"/>
    <property type="evidence" value="ECO:0007669"/>
    <property type="project" value="UniProtKB-UniRule"/>
</dbReference>
<dbReference type="CDD" id="cd03699">
    <property type="entry name" value="EF4_II"/>
    <property type="match status" value="1"/>
</dbReference>
<dbReference type="CDD" id="cd16260">
    <property type="entry name" value="EF4_III"/>
    <property type="match status" value="1"/>
</dbReference>
<dbReference type="CDD" id="cd01890">
    <property type="entry name" value="LepA"/>
    <property type="match status" value="1"/>
</dbReference>
<dbReference type="CDD" id="cd03709">
    <property type="entry name" value="lepA_C"/>
    <property type="match status" value="1"/>
</dbReference>
<dbReference type="FunFam" id="3.40.50.300:FF:000078">
    <property type="entry name" value="Elongation factor 4"/>
    <property type="match status" value="1"/>
</dbReference>
<dbReference type="FunFam" id="2.40.30.10:FF:000015">
    <property type="entry name" value="Translation factor GUF1, mitochondrial"/>
    <property type="match status" value="1"/>
</dbReference>
<dbReference type="FunFam" id="3.30.70.240:FF:000007">
    <property type="entry name" value="Translation factor GUF1, mitochondrial"/>
    <property type="match status" value="1"/>
</dbReference>
<dbReference type="FunFam" id="3.30.70.2570:FF:000001">
    <property type="entry name" value="Translation factor GUF1, mitochondrial"/>
    <property type="match status" value="1"/>
</dbReference>
<dbReference type="FunFam" id="3.30.70.870:FF:000004">
    <property type="entry name" value="Translation factor GUF1, mitochondrial"/>
    <property type="match status" value="1"/>
</dbReference>
<dbReference type="Gene3D" id="3.30.70.240">
    <property type="match status" value="1"/>
</dbReference>
<dbReference type="Gene3D" id="3.30.70.2570">
    <property type="entry name" value="Elongation factor 4, C-terminal domain"/>
    <property type="match status" value="1"/>
</dbReference>
<dbReference type="Gene3D" id="3.30.70.870">
    <property type="entry name" value="Elongation Factor G (Translational Gtpase), domain 3"/>
    <property type="match status" value="1"/>
</dbReference>
<dbReference type="Gene3D" id="3.40.50.300">
    <property type="entry name" value="P-loop containing nucleotide triphosphate hydrolases"/>
    <property type="match status" value="1"/>
</dbReference>
<dbReference type="Gene3D" id="2.40.30.10">
    <property type="entry name" value="Translation factors"/>
    <property type="match status" value="1"/>
</dbReference>
<dbReference type="HAMAP" id="MF_00071">
    <property type="entry name" value="LepA"/>
    <property type="match status" value="1"/>
</dbReference>
<dbReference type="InterPro" id="IPR006297">
    <property type="entry name" value="EF-4"/>
</dbReference>
<dbReference type="InterPro" id="IPR035647">
    <property type="entry name" value="EFG_III/V"/>
</dbReference>
<dbReference type="InterPro" id="IPR000640">
    <property type="entry name" value="EFG_V-like"/>
</dbReference>
<dbReference type="InterPro" id="IPR004161">
    <property type="entry name" value="EFTu-like_2"/>
</dbReference>
<dbReference type="InterPro" id="IPR031157">
    <property type="entry name" value="G_TR_CS"/>
</dbReference>
<dbReference type="InterPro" id="IPR038363">
    <property type="entry name" value="LepA_C_sf"/>
</dbReference>
<dbReference type="InterPro" id="IPR013842">
    <property type="entry name" value="LepA_CTD"/>
</dbReference>
<dbReference type="InterPro" id="IPR035654">
    <property type="entry name" value="LepA_IV"/>
</dbReference>
<dbReference type="InterPro" id="IPR027417">
    <property type="entry name" value="P-loop_NTPase"/>
</dbReference>
<dbReference type="InterPro" id="IPR005225">
    <property type="entry name" value="Small_GTP-bd"/>
</dbReference>
<dbReference type="InterPro" id="IPR000795">
    <property type="entry name" value="T_Tr_GTP-bd_dom"/>
</dbReference>
<dbReference type="NCBIfam" id="TIGR01393">
    <property type="entry name" value="lepA"/>
    <property type="match status" value="1"/>
</dbReference>
<dbReference type="NCBIfam" id="TIGR00231">
    <property type="entry name" value="small_GTP"/>
    <property type="match status" value="1"/>
</dbReference>
<dbReference type="PANTHER" id="PTHR43512:SF4">
    <property type="entry name" value="TRANSLATION FACTOR GUF1 HOMOLOG, CHLOROPLASTIC"/>
    <property type="match status" value="1"/>
</dbReference>
<dbReference type="PANTHER" id="PTHR43512">
    <property type="entry name" value="TRANSLATION FACTOR GUF1-RELATED"/>
    <property type="match status" value="1"/>
</dbReference>
<dbReference type="Pfam" id="PF00679">
    <property type="entry name" value="EFG_C"/>
    <property type="match status" value="1"/>
</dbReference>
<dbReference type="Pfam" id="PF00009">
    <property type="entry name" value="GTP_EFTU"/>
    <property type="match status" value="1"/>
</dbReference>
<dbReference type="Pfam" id="PF03144">
    <property type="entry name" value="GTP_EFTU_D2"/>
    <property type="match status" value="1"/>
</dbReference>
<dbReference type="Pfam" id="PF06421">
    <property type="entry name" value="LepA_C"/>
    <property type="match status" value="1"/>
</dbReference>
<dbReference type="PRINTS" id="PR00315">
    <property type="entry name" value="ELONGATNFCT"/>
</dbReference>
<dbReference type="SUPFAM" id="SSF54980">
    <property type="entry name" value="EF-G C-terminal domain-like"/>
    <property type="match status" value="2"/>
</dbReference>
<dbReference type="SUPFAM" id="SSF52540">
    <property type="entry name" value="P-loop containing nucleoside triphosphate hydrolases"/>
    <property type="match status" value="1"/>
</dbReference>
<dbReference type="PROSITE" id="PS00301">
    <property type="entry name" value="G_TR_1"/>
    <property type="match status" value="1"/>
</dbReference>
<dbReference type="PROSITE" id="PS51722">
    <property type="entry name" value="G_TR_2"/>
    <property type="match status" value="1"/>
</dbReference>
<accession>Q14FW1</accession>
<gene>
    <name evidence="1" type="primary">lepA</name>
    <name type="ordered locus">FTF1678c</name>
</gene>
<feature type="chain" id="PRO_0000265659" description="Elongation factor 4">
    <location>
        <begin position="1"/>
        <end position="594"/>
    </location>
</feature>
<feature type="domain" description="tr-type G">
    <location>
        <begin position="2"/>
        <end position="184"/>
    </location>
</feature>
<feature type="binding site" evidence="1">
    <location>
        <begin position="14"/>
        <end position="19"/>
    </location>
    <ligand>
        <name>GTP</name>
        <dbReference type="ChEBI" id="CHEBI:37565"/>
    </ligand>
</feature>
<feature type="binding site" evidence="1">
    <location>
        <begin position="131"/>
        <end position="134"/>
    </location>
    <ligand>
        <name>GTP</name>
        <dbReference type="ChEBI" id="CHEBI:37565"/>
    </ligand>
</feature>
<comment type="function">
    <text evidence="1">Required for accurate and efficient protein synthesis under certain stress conditions. May act as a fidelity factor of the translation reaction, by catalyzing a one-codon backward translocation of tRNAs on improperly translocated ribosomes. Back-translocation proceeds from a post-translocation (POST) complex to a pre-translocation (PRE) complex, thus giving elongation factor G a second chance to translocate the tRNAs correctly. Binds to ribosomes in a GTP-dependent manner.</text>
</comment>
<comment type="catalytic activity">
    <reaction evidence="1">
        <text>GTP + H2O = GDP + phosphate + H(+)</text>
        <dbReference type="Rhea" id="RHEA:19669"/>
        <dbReference type="ChEBI" id="CHEBI:15377"/>
        <dbReference type="ChEBI" id="CHEBI:15378"/>
        <dbReference type="ChEBI" id="CHEBI:37565"/>
        <dbReference type="ChEBI" id="CHEBI:43474"/>
        <dbReference type="ChEBI" id="CHEBI:58189"/>
        <dbReference type="EC" id="3.6.5.n1"/>
    </reaction>
</comment>
<comment type="subcellular location">
    <subcellularLocation>
        <location evidence="1">Cell inner membrane</location>
        <topology evidence="1">Peripheral membrane protein</topology>
        <orientation evidence="1">Cytoplasmic side</orientation>
    </subcellularLocation>
</comment>
<comment type="similarity">
    <text evidence="1">Belongs to the TRAFAC class translation factor GTPase superfamily. Classic translation factor GTPase family. LepA subfamily.</text>
</comment>
<reference key="1">
    <citation type="journal article" date="2007" name="PLoS ONE">
        <title>Genome sequencing shows that European isolates of Francisella tularensis subspecies tularensis are almost identical to US laboratory strain Schu S4.</title>
        <authorList>
            <person name="Chaudhuri R.R."/>
            <person name="Ren C.-P."/>
            <person name="Desmond L."/>
            <person name="Vincent G.A."/>
            <person name="Silman N.J."/>
            <person name="Brehm J.K."/>
            <person name="Elmore M.J."/>
            <person name="Hudson M.J."/>
            <person name="Forsman M."/>
            <person name="Isherwood K.E."/>
            <person name="Gurycova D."/>
            <person name="Minton N.P."/>
            <person name="Titball R.W."/>
            <person name="Pallen M.J."/>
            <person name="Vipond R."/>
        </authorList>
    </citation>
    <scope>NUCLEOTIDE SEQUENCE [LARGE SCALE GENOMIC DNA]</scope>
    <source>
        <strain>FSC 198</strain>
    </source>
</reference>
<evidence type="ECO:0000255" key="1">
    <source>
        <dbReference type="HAMAP-Rule" id="MF_00071"/>
    </source>
</evidence>
<organism>
    <name type="scientific">Francisella tularensis subsp. tularensis (strain FSC 198)</name>
    <dbReference type="NCBI Taxonomy" id="393115"/>
    <lineage>
        <taxon>Bacteria</taxon>
        <taxon>Pseudomonadati</taxon>
        <taxon>Pseudomonadota</taxon>
        <taxon>Gammaproteobacteria</taxon>
        <taxon>Thiotrichales</taxon>
        <taxon>Francisellaceae</taxon>
        <taxon>Francisella</taxon>
    </lineage>
</organism>